<feature type="chain" id="PRO_0000082888" description="Peptide deformylase">
    <location>
        <begin position="1"/>
        <end position="170"/>
    </location>
</feature>
<feature type="active site" evidence="1">
    <location>
        <position position="137"/>
    </location>
</feature>
<feature type="binding site" evidence="1">
    <location>
        <position position="94"/>
    </location>
    <ligand>
        <name>Fe cation</name>
        <dbReference type="ChEBI" id="CHEBI:24875"/>
    </ligand>
</feature>
<feature type="binding site" evidence="1">
    <location>
        <position position="136"/>
    </location>
    <ligand>
        <name>Fe cation</name>
        <dbReference type="ChEBI" id="CHEBI:24875"/>
    </ligand>
</feature>
<feature type="binding site" evidence="1">
    <location>
        <position position="140"/>
    </location>
    <ligand>
        <name>Fe cation</name>
        <dbReference type="ChEBI" id="CHEBI:24875"/>
    </ligand>
</feature>
<comment type="function">
    <text evidence="1">Removes the formyl group from the N-terminal Met of newly synthesized proteins. Requires at least a dipeptide for an efficient rate of reaction. N-terminal L-methionine is a prerequisite for activity but the enzyme has broad specificity at other positions.</text>
</comment>
<comment type="catalytic activity">
    <reaction evidence="1">
        <text>N-terminal N-formyl-L-methionyl-[peptide] + H2O = N-terminal L-methionyl-[peptide] + formate</text>
        <dbReference type="Rhea" id="RHEA:24420"/>
        <dbReference type="Rhea" id="RHEA-COMP:10639"/>
        <dbReference type="Rhea" id="RHEA-COMP:10640"/>
        <dbReference type="ChEBI" id="CHEBI:15377"/>
        <dbReference type="ChEBI" id="CHEBI:15740"/>
        <dbReference type="ChEBI" id="CHEBI:49298"/>
        <dbReference type="ChEBI" id="CHEBI:64731"/>
        <dbReference type="EC" id="3.5.1.88"/>
    </reaction>
</comment>
<comment type="cofactor">
    <cofactor evidence="1">
        <name>Fe(2+)</name>
        <dbReference type="ChEBI" id="CHEBI:29033"/>
    </cofactor>
    <text evidence="1">Binds 1 Fe(2+) ion.</text>
</comment>
<comment type="similarity">
    <text evidence="1">Belongs to the polypeptide deformylase family.</text>
</comment>
<proteinExistence type="inferred from homology"/>
<sequence>MALLPILEFPDPRLRTKAVRVGVAEVVSSSFQTLLDDMFETMYAAPGIGLAATQVNVHQRFMVIDVSEEKNVPMVFINPEIVTREGDQVFQEGCLSVPGIHADVTRALSIVVRFLDRHGDEQQLTAEGLLAVCIQHEMDHLDGKLFIDYLSPLKRDMVRRKLEKQRRRAS</sequence>
<accession>P63918</accession>
<accession>Q9PEV2</accession>
<keyword id="KW-0378">Hydrolase</keyword>
<keyword id="KW-0408">Iron</keyword>
<keyword id="KW-0479">Metal-binding</keyword>
<keyword id="KW-0648">Protein biosynthesis</keyword>
<keyword id="KW-1185">Reference proteome</keyword>
<organism>
    <name type="scientific">Xylella fastidiosa (strain Temecula1 / ATCC 700964)</name>
    <dbReference type="NCBI Taxonomy" id="183190"/>
    <lineage>
        <taxon>Bacteria</taxon>
        <taxon>Pseudomonadati</taxon>
        <taxon>Pseudomonadota</taxon>
        <taxon>Gammaproteobacteria</taxon>
        <taxon>Lysobacterales</taxon>
        <taxon>Lysobacteraceae</taxon>
        <taxon>Xylella</taxon>
    </lineage>
</organism>
<evidence type="ECO:0000255" key="1">
    <source>
        <dbReference type="HAMAP-Rule" id="MF_00163"/>
    </source>
</evidence>
<dbReference type="EC" id="3.5.1.88" evidence="1"/>
<dbReference type="EMBL" id="AE009442">
    <property type="protein sequence ID" value="AAO29597.1"/>
    <property type="molecule type" value="Genomic_DNA"/>
</dbReference>
<dbReference type="RefSeq" id="WP_004089639.1">
    <property type="nucleotide sequence ID" value="NC_004556.1"/>
</dbReference>
<dbReference type="SMR" id="P63918"/>
<dbReference type="GeneID" id="93905610"/>
<dbReference type="KEGG" id="xft:PD_1763"/>
<dbReference type="HOGENOM" id="CLU_061901_2_1_6"/>
<dbReference type="Proteomes" id="UP000002516">
    <property type="component" value="Chromosome"/>
</dbReference>
<dbReference type="GO" id="GO:0046872">
    <property type="term" value="F:metal ion binding"/>
    <property type="evidence" value="ECO:0007669"/>
    <property type="project" value="UniProtKB-KW"/>
</dbReference>
<dbReference type="GO" id="GO:0042586">
    <property type="term" value="F:peptide deformylase activity"/>
    <property type="evidence" value="ECO:0007669"/>
    <property type="project" value="UniProtKB-UniRule"/>
</dbReference>
<dbReference type="GO" id="GO:0043686">
    <property type="term" value="P:co-translational protein modification"/>
    <property type="evidence" value="ECO:0007669"/>
    <property type="project" value="TreeGrafter"/>
</dbReference>
<dbReference type="GO" id="GO:0006412">
    <property type="term" value="P:translation"/>
    <property type="evidence" value="ECO:0007669"/>
    <property type="project" value="UniProtKB-UniRule"/>
</dbReference>
<dbReference type="CDD" id="cd00487">
    <property type="entry name" value="Pep_deformylase"/>
    <property type="match status" value="1"/>
</dbReference>
<dbReference type="FunFam" id="3.90.45.10:FF:000001">
    <property type="entry name" value="Peptide deformylase"/>
    <property type="match status" value="1"/>
</dbReference>
<dbReference type="Gene3D" id="3.90.45.10">
    <property type="entry name" value="Peptide deformylase"/>
    <property type="match status" value="1"/>
</dbReference>
<dbReference type="HAMAP" id="MF_00163">
    <property type="entry name" value="Pep_deformylase"/>
    <property type="match status" value="1"/>
</dbReference>
<dbReference type="InterPro" id="IPR023635">
    <property type="entry name" value="Peptide_deformylase"/>
</dbReference>
<dbReference type="InterPro" id="IPR036821">
    <property type="entry name" value="Peptide_deformylase_sf"/>
</dbReference>
<dbReference type="NCBIfam" id="TIGR00079">
    <property type="entry name" value="pept_deformyl"/>
    <property type="match status" value="1"/>
</dbReference>
<dbReference type="NCBIfam" id="NF001159">
    <property type="entry name" value="PRK00150.1-3"/>
    <property type="match status" value="1"/>
</dbReference>
<dbReference type="PANTHER" id="PTHR10458">
    <property type="entry name" value="PEPTIDE DEFORMYLASE"/>
    <property type="match status" value="1"/>
</dbReference>
<dbReference type="PANTHER" id="PTHR10458:SF21">
    <property type="entry name" value="PEPTIDE DEFORMYLASE"/>
    <property type="match status" value="1"/>
</dbReference>
<dbReference type="Pfam" id="PF01327">
    <property type="entry name" value="Pep_deformylase"/>
    <property type="match status" value="1"/>
</dbReference>
<dbReference type="PIRSF" id="PIRSF004749">
    <property type="entry name" value="Pep_def"/>
    <property type="match status" value="1"/>
</dbReference>
<dbReference type="PRINTS" id="PR01576">
    <property type="entry name" value="PDEFORMYLASE"/>
</dbReference>
<dbReference type="SUPFAM" id="SSF56420">
    <property type="entry name" value="Peptide deformylase"/>
    <property type="match status" value="1"/>
</dbReference>
<protein>
    <recommendedName>
        <fullName evidence="1">Peptide deformylase</fullName>
        <shortName evidence="1">PDF</shortName>
        <ecNumber evidence="1">3.5.1.88</ecNumber>
    </recommendedName>
    <alternativeName>
        <fullName evidence="1">Polypeptide deformylase</fullName>
    </alternativeName>
</protein>
<gene>
    <name evidence="1" type="primary">def</name>
    <name type="ordered locus">PD_1763</name>
</gene>
<name>DEF_XYLFT</name>
<reference key="1">
    <citation type="journal article" date="2003" name="J. Bacteriol.">
        <title>Comparative analyses of the complete genome sequences of Pierce's disease and citrus variegated chlorosis strains of Xylella fastidiosa.</title>
        <authorList>
            <person name="Van Sluys M.A."/>
            <person name="de Oliveira M.C."/>
            <person name="Monteiro-Vitorello C.B."/>
            <person name="Miyaki C.Y."/>
            <person name="Furlan L.R."/>
            <person name="Camargo L.E.A."/>
            <person name="da Silva A.C.R."/>
            <person name="Moon D.H."/>
            <person name="Takita M.A."/>
            <person name="Lemos E.G.M."/>
            <person name="Machado M.A."/>
            <person name="Ferro M.I.T."/>
            <person name="da Silva F.R."/>
            <person name="Goldman M.H.S."/>
            <person name="Goldman G.H."/>
            <person name="Lemos M.V.F."/>
            <person name="El-Dorry H."/>
            <person name="Tsai S.M."/>
            <person name="Carrer H."/>
            <person name="Carraro D.M."/>
            <person name="de Oliveira R.C."/>
            <person name="Nunes L.R."/>
            <person name="Siqueira W.J."/>
            <person name="Coutinho L.L."/>
            <person name="Kimura E.T."/>
            <person name="Ferro E.S."/>
            <person name="Harakava R."/>
            <person name="Kuramae E.E."/>
            <person name="Marino C.L."/>
            <person name="Giglioti E."/>
            <person name="Abreu I.L."/>
            <person name="Alves L.M.C."/>
            <person name="do Amaral A.M."/>
            <person name="Baia G.S."/>
            <person name="Blanco S.R."/>
            <person name="Brito M.S."/>
            <person name="Cannavan F.S."/>
            <person name="Celestino A.V."/>
            <person name="da Cunha A.F."/>
            <person name="Fenille R.C."/>
            <person name="Ferro J.A."/>
            <person name="Formighieri E.F."/>
            <person name="Kishi L.T."/>
            <person name="Leoni S.G."/>
            <person name="Oliveira A.R."/>
            <person name="Rosa V.E. Jr."/>
            <person name="Sassaki F.T."/>
            <person name="Sena J.A.D."/>
            <person name="de Souza A.A."/>
            <person name="Truffi D."/>
            <person name="Tsukumo F."/>
            <person name="Yanai G.M."/>
            <person name="Zaros L.G."/>
            <person name="Civerolo E.L."/>
            <person name="Simpson A.J.G."/>
            <person name="Almeida N.F. Jr."/>
            <person name="Setubal J.C."/>
            <person name="Kitajima J.P."/>
        </authorList>
    </citation>
    <scope>NUCLEOTIDE SEQUENCE [LARGE SCALE GENOMIC DNA]</scope>
    <source>
        <strain>Temecula1 / ATCC 700964</strain>
    </source>
</reference>